<evidence type="ECO:0000250" key="1"/>
<evidence type="ECO:0000255" key="2">
    <source>
        <dbReference type="PROSITE-ProRule" id="PRU00159"/>
    </source>
</evidence>
<evidence type="ECO:0000255" key="3">
    <source>
        <dbReference type="PROSITE-ProRule" id="PRU00191"/>
    </source>
</evidence>
<evidence type="ECO:0000255" key="4">
    <source>
        <dbReference type="PROSITE-ProRule" id="PRU00192"/>
    </source>
</evidence>
<evidence type="ECO:0000255" key="5">
    <source>
        <dbReference type="PROSITE-ProRule" id="PRU10028"/>
    </source>
</evidence>
<evidence type="ECO:0000256" key="6">
    <source>
        <dbReference type="SAM" id="MobiDB-lite"/>
    </source>
</evidence>
<feature type="initiator methionine" description="Removed" evidence="1">
    <location>
        <position position="1"/>
    </location>
</feature>
<feature type="chain" id="PRO_0000088145" description="Tyrosine-protein kinase Src-1">
    <location>
        <begin position="2"/>
        <end position="532"/>
    </location>
</feature>
<feature type="domain" description="SH3" evidence="4">
    <location>
        <begin position="80"/>
        <end position="141"/>
    </location>
</feature>
<feature type="domain" description="SH2" evidence="3">
    <location>
        <begin position="147"/>
        <end position="244"/>
    </location>
</feature>
<feature type="domain" description="Protein kinase" evidence="2">
    <location>
        <begin position="266"/>
        <end position="519"/>
    </location>
</feature>
<feature type="region of interest" description="Disordered" evidence="6">
    <location>
        <begin position="1"/>
        <end position="52"/>
    </location>
</feature>
<feature type="compositionally biased region" description="Basic and acidic residues" evidence="6">
    <location>
        <begin position="7"/>
        <end position="19"/>
    </location>
</feature>
<feature type="compositionally biased region" description="Polar residues" evidence="6">
    <location>
        <begin position="26"/>
        <end position="40"/>
    </location>
</feature>
<feature type="active site" description="Proton acceptor" evidence="2 5">
    <location>
        <position position="385"/>
    </location>
</feature>
<feature type="binding site" evidence="2">
    <location>
        <begin position="272"/>
        <end position="280"/>
    </location>
    <ligand>
        <name>ATP</name>
        <dbReference type="ChEBI" id="CHEBI:30616"/>
    </ligand>
</feature>
<feature type="binding site" evidence="2">
    <location>
        <position position="294"/>
    </location>
    <ligand>
        <name>ATP</name>
        <dbReference type="ChEBI" id="CHEBI:30616"/>
    </ligand>
</feature>
<feature type="modified residue" description="Phosphotyrosine; by autocatalysis" evidence="1">
    <location>
        <position position="415"/>
    </location>
</feature>
<feature type="lipid moiety-binding region" description="N-myristoyl glycine" evidence="1">
    <location>
        <position position="2"/>
    </location>
</feature>
<dbReference type="EC" id="2.7.10.2"/>
<dbReference type="EMBL" id="M24704">
    <property type="protein sequence ID" value="AAA49962.2"/>
    <property type="molecule type" value="mRNA"/>
</dbReference>
<dbReference type="SMR" id="P13115"/>
<dbReference type="AGR" id="Xenbase:XB-GENE-6252879"/>
<dbReference type="Xenbase" id="XB-GENE-6252879">
    <property type="gene designation" value="src.S"/>
</dbReference>
<dbReference type="BRENDA" id="2.7.10.2">
    <property type="organism ID" value="6725"/>
</dbReference>
<dbReference type="Proteomes" id="UP000186698">
    <property type="component" value="Unplaced"/>
</dbReference>
<dbReference type="GO" id="GO:0005886">
    <property type="term" value="C:plasma membrane"/>
    <property type="evidence" value="ECO:0000318"/>
    <property type="project" value="GO_Central"/>
</dbReference>
<dbReference type="GO" id="GO:0005524">
    <property type="term" value="F:ATP binding"/>
    <property type="evidence" value="ECO:0007669"/>
    <property type="project" value="UniProtKB-KW"/>
</dbReference>
<dbReference type="GO" id="GO:0004715">
    <property type="term" value="F:non-membrane spanning protein tyrosine kinase activity"/>
    <property type="evidence" value="ECO:0000318"/>
    <property type="project" value="GO_Central"/>
</dbReference>
<dbReference type="GO" id="GO:0005102">
    <property type="term" value="F:signaling receptor binding"/>
    <property type="evidence" value="ECO:0000318"/>
    <property type="project" value="GO_Central"/>
</dbReference>
<dbReference type="GO" id="GO:0007155">
    <property type="term" value="P:cell adhesion"/>
    <property type="evidence" value="ECO:0000318"/>
    <property type="project" value="GO_Central"/>
</dbReference>
<dbReference type="GO" id="GO:0030154">
    <property type="term" value="P:cell differentiation"/>
    <property type="evidence" value="ECO:0000318"/>
    <property type="project" value="GO_Central"/>
</dbReference>
<dbReference type="GO" id="GO:0007173">
    <property type="term" value="P:epidermal growth factor receptor signaling pathway"/>
    <property type="evidence" value="ECO:0000318"/>
    <property type="project" value="GO_Central"/>
</dbReference>
<dbReference type="GO" id="GO:2001237">
    <property type="term" value="P:negative regulation of extrinsic apoptotic signaling pathway"/>
    <property type="evidence" value="ECO:0000318"/>
    <property type="project" value="GO_Central"/>
</dbReference>
<dbReference type="GO" id="GO:2001243">
    <property type="term" value="P:negative regulation of intrinsic apoptotic signaling pathway"/>
    <property type="evidence" value="ECO:0000318"/>
    <property type="project" value="GO_Central"/>
</dbReference>
<dbReference type="GO" id="GO:0050847">
    <property type="term" value="P:progesterone receptor signaling pathway"/>
    <property type="evidence" value="ECO:0000318"/>
    <property type="project" value="GO_Central"/>
</dbReference>
<dbReference type="CDD" id="cd05071">
    <property type="entry name" value="PTKc_Src"/>
    <property type="match status" value="1"/>
</dbReference>
<dbReference type="CDD" id="cd10365">
    <property type="entry name" value="SH2_Src_Src"/>
    <property type="match status" value="1"/>
</dbReference>
<dbReference type="CDD" id="cd12008">
    <property type="entry name" value="SH3_Src"/>
    <property type="match status" value="1"/>
</dbReference>
<dbReference type="FunFam" id="1.10.510.10:FF:000553">
    <property type="entry name" value="Tyrosine-protein kinase"/>
    <property type="match status" value="1"/>
</dbReference>
<dbReference type="FunFam" id="2.30.30.40:FF:000083">
    <property type="entry name" value="Tyrosine-protein kinase"/>
    <property type="match status" value="1"/>
</dbReference>
<dbReference type="FunFam" id="3.30.200.20:FF:000016">
    <property type="entry name" value="Tyrosine-protein kinase"/>
    <property type="match status" value="1"/>
</dbReference>
<dbReference type="FunFam" id="3.30.505.10:FF:000001">
    <property type="entry name" value="Tyrosine-protein kinase"/>
    <property type="match status" value="1"/>
</dbReference>
<dbReference type="Gene3D" id="3.30.200.20">
    <property type="entry name" value="Phosphorylase Kinase, domain 1"/>
    <property type="match status" value="1"/>
</dbReference>
<dbReference type="Gene3D" id="3.30.505.10">
    <property type="entry name" value="SH2 domain"/>
    <property type="match status" value="1"/>
</dbReference>
<dbReference type="Gene3D" id="2.30.30.40">
    <property type="entry name" value="SH3 Domains"/>
    <property type="match status" value="1"/>
</dbReference>
<dbReference type="Gene3D" id="1.10.510.10">
    <property type="entry name" value="Transferase(Phosphotransferase) domain 1"/>
    <property type="match status" value="1"/>
</dbReference>
<dbReference type="InterPro" id="IPR011009">
    <property type="entry name" value="Kinase-like_dom_sf"/>
</dbReference>
<dbReference type="InterPro" id="IPR050198">
    <property type="entry name" value="Non-receptor_tyrosine_kinases"/>
</dbReference>
<dbReference type="InterPro" id="IPR000719">
    <property type="entry name" value="Prot_kinase_dom"/>
</dbReference>
<dbReference type="InterPro" id="IPR017441">
    <property type="entry name" value="Protein_kinase_ATP_BS"/>
</dbReference>
<dbReference type="InterPro" id="IPR001245">
    <property type="entry name" value="Ser-Thr/Tyr_kinase_cat_dom"/>
</dbReference>
<dbReference type="InterPro" id="IPR000980">
    <property type="entry name" value="SH2"/>
</dbReference>
<dbReference type="InterPro" id="IPR036860">
    <property type="entry name" value="SH2_dom_sf"/>
</dbReference>
<dbReference type="InterPro" id="IPR036028">
    <property type="entry name" value="SH3-like_dom_sf"/>
</dbReference>
<dbReference type="InterPro" id="IPR001452">
    <property type="entry name" value="SH3_domain"/>
</dbReference>
<dbReference type="InterPro" id="IPR008266">
    <property type="entry name" value="Tyr_kinase_AS"/>
</dbReference>
<dbReference type="InterPro" id="IPR020635">
    <property type="entry name" value="Tyr_kinase_cat_dom"/>
</dbReference>
<dbReference type="PANTHER" id="PTHR24418">
    <property type="entry name" value="TYROSINE-PROTEIN KINASE"/>
    <property type="match status" value="1"/>
</dbReference>
<dbReference type="Pfam" id="PF07714">
    <property type="entry name" value="PK_Tyr_Ser-Thr"/>
    <property type="match status" value="1"/>
</dbReference>
<dbReference type="Pfam" id="PF00017">
    <property type="entry name" value="SH2"/>
    <property type="match status" value="1"/>
</dbReference>
<dbReference type="Pfam" id="PF00018">
    <property type="entry name" value="SH3_1"/>
    <property type="match status" value="1"/>
</dbReference>
<dbReference type="PRINTS" id="PR00401">
    <property type="entry name" value="SH2DOMAIN"/>
</dbReference>
<dbReference type="PRINTS" id="PR00452">
    <property type="entry name" value="SH3DOMAIN"/>
</dbReference>
<dbReference type="PRINTS" id="PR00109">
    <property type="entry name" value="TYRKINASE"/>
</dbReference>
<dbReference type="SMART" id="SM00252">
    <property type="entry name" value="SH2"/>
    <property type="match status" value="1"/>
</dbReference>
<dbReference type="SMART" id="SM00326">
    <property type="entry name" value="SH3"/>
    <property type="match status" value="1"/>
</dbReference>
<dbReference type="SMART" id="SM00219">
    <property type="entry name" value="TyrKc"/>
    <property type="match status" value="1"/>
</dbReference>
<dbReference type="SUPFAM" id="SSF56112">
    <property type="entry name" value="Protein kinase-like (PK-like)"/>
    <property type="match status" value="1"/>
</dbReference>
<dbReference type="SUPFAM" id="SSF55550">
    <property type="entry name" value="SH2 domain"/>
    <property type="match status" value="1"/>
</dbReference>
<dbReference type="SUPFAM" id="SSF50044">
    <property type="entry name" value="SH3-domain"/>
    <property type="match status" value="1"/>
</dbReference>
<dbReference type="PROSITE" id="PS00107">
    <property type="entry name" value="PROTEIN_KINASE_ATP"/>
    <property type="match status" value="1"/>
</dbReference>
<dbReference type="PROSITE" id="PS50011">
    <property type="entry name" value="PROTEIN_KINASE_DOM"/>
    <property type="match status" value="1"/>
</dbReference>
<dbReference type="PROSITE" id="PS00109">
    <property type="entry name" value="PROTEIN_KINASE_TYR"/>
    <property type="match status" value="1"/>
</dbReference>
<dbReference type="PROSITE" id="PS50001">
    <property type="entry name" value="SH2"/>
    <property type="match status" value="1"/>
</dbReference>
<dbReference type="PROSITE" id="PS50002">
    <property type="entry name" value="SH3"/>
    <property type="match status" value="1"/>
</dbReference>
<proteinExistence type="evidence at transcript level"/>
<comment type="catalytic activity">
    <reaction evidence="5">
        <text>L-tyrosyl-[protein] + ATP = O-phospho-L-tyrosyl-[protein] + ADP + H(+)</text>
        <dbReference type="Rhea" id="RHEA:10596"/>
        <dbReference type="Rhea" id="RHEA-COMP:10136"/>
        <dbReference type="Rhea" id="RHEA-COMP:20101"/>
        <dbReference type="ChEBI" id="CHEBI:15378"/>
        <dbReference type="ChEBI" id="CHEBI:30616"/>
        <dbReference type="ChEBI" id="CHEBI:46858"/>
        <dbReference type="ChEBI" id="CHEBI:61978"/>
        <dbReference type="ChEBI" id="CHEBI:456216"/>
        <dbReference type="EC" id="2.7.10.2"/>
    </reaction>
</comment>
<comment type="subcellular location">
    <subcellularLocation>
        <location evidence="1">Cell membrane</location>
    </subcellularLocation>
</comment>
<comment type="similarity">
    <text evidence="2">Belongs to the protein kinase superfamily. Tyr protein kinase family. SRC subfamily.</text>
</comment>
<sequence>MGATKSKPREGGPRSRSLDIVEGSHQPFTSLSASQTPNKSLDSHRPPAQPFGGNCDLTPFGGINFSDTITSPQRTGPLAGGVTTFVALYDYESRTETDLSFKKGERLQIVNNTEGDWWLARSLSSGQTGYIPSNYVAPSDSIQAEEWYLGKITRREAERLLLSLENPRGTFLVRESETTKGAYCLSVSDYDANRGLNVKHYKIRKLDSGGFYITSRTQFISLQQLVAYYSKHADGLCHRLTTVCPTAKPQTQGLSRDAWEIPRDSLRLELKLGQGCFGEVWMGTWNGTTRVAIKTLKPGTMSPEAFLQEAQVMKKLRHEKLVQLYAVVSEEPIYIVTEYISKGSLLDFLKGEMGRYLRLPQLVDMAAQIASGMAYVERMNYVHRDLRAANILVGENLVCKVADFGLARLIEDNEYTARQGAKFPIKWTAPEAALYGRFTIKSDVWSFGILLTELTTKGRVPYPGMVNREVLDQVERGYRMPCPPDCPESLHDLMFQCWRKDPEERPTFEYLQAFLEDYFTATEPQYQPGDNL</sequence>
<reference key="1">
    <citation type="journal article" date="1989" name="J. Biol. Chem.">
        <title>The two Xenopus laevis SRC genes are co-expressed and each produces functional pp60src.</title>
        <authorList>
            <person name="Steele R.E."/>
            <person name="Unger T.F."/>
            <person name="Mardis M.J."/>
            <person name="Fero J.B."/>
        </authorList>
    </citation>
    <scope>NUCLEOTIDE SEQUENCE [MRNA]</scope>
</reference>
<reference key="2">
    <citation type="submission" date="2001-08" db="EMBL/GenBank/DDBJ databases">
        <authorList>
            <person name="Steele R.E."/>
        </authorList>
    </citation>
    <scope>SEQUENCE REVISION TO 220; 242 AND 340</scope>
</reference>
<keyword id="KW-0067">ATP-binding</keyword>
<keyword id="KW-1003">Cell membrane</keyword>
<keyword id="KW-0418">Kinase</keyword>
<keyword id="KW-0449">Lipoprotein</keyword>
<keyword id="KW-0472">Membrane</keyword>
<keyword id="KW-0519">Myristate</keyword>
<keyword id="KW-0547">Nucleotide-binding</keyword>
<keyword id="KW-0597">Phosphoprotein</keyword>
<keyword id="KW-1185">Reference proteome</keyword>
<keyword id="KW-0727">SH2 domain</keyword>
<keyword id="KW-0728">SH3 domain</keyword>
<keyword id="KW-0808">Transferase</keyword>
<keyword id="KW-0829">Tyrosine-protein kinase</keyword>
<accession>P13115</accession>
<name>SRC1_XENLA</name>
<organism>
    <name type="scientific">Xenopus laevis</name>
    <name type="common">African clawed frog</name>
    <dbReference type="NCBI Taxonomy" id="8355"/>
    <lineage>
        <taxon>Eukaryota</taxon>
        <taxon>Metazoa</taxon>
        <taxon>Chordata</taxon>
        <taxon>Craniata</taxon>
        <taxon>Vertebrata</taxon>
        <taxon>Euteleostomi</taxon>
        <taxon>Amphibia</taxon>
        <taxon>Batrachia</taxon>
        <taxon>Anura</taxon>
        <taxon>Pipoidea</taxon>
        <taxon>Pipidae</taxon>
        <taxon>Xenopodinae</taxon>
        <taxon>Xenopus</taxon>
        <taxon>Xenopus</taxon>
    </lineage>
</organism>
<gene>
    <name type="primary">src-a</name>
    <name type="synonym">src1</name>
</gene>
<protein>
    <recommendedName>
        <fullName>Tyrosine-protein kinase Src-1</fullName>
        <ecNumber>2.7.10.2</ecNumber>
    </recommendedName>
    <alternativeName>
        <fullName>p60-Src-1</fullName>
    </alternativeName>
</protein>